<proteinExistence type="inferred from homology"/>
<dbReference type="EC" id="4.1.1.48" evidence="1"/>
<dbReference type="EMBL" id="CP000958">
    <property type="protein sequence ID" value="ACA89681.1"/>
    <property type="molecule type" value="Genomic_DNA"/>
</dbReference>
<dbReference type="RefSeq" id="WP_006477043.1">
    <property type="nucleotide sequence ID" value="NC_010508.1"/>
</dbReference>
<dbReference type="SMR" id="B1JUU5"/>
<dbReference type="GeneID" id="83047299"/>
<dbReference type="KEGG" id="bcm:Bcenmc03_0503"/>
<dbReference type="HOGENOM" id="CLU_034247_2_0_4"/>
<dbReference type="UniPathway" id="UPA00035">
    <property type="reaction ID" value="UER00043"/>
</dbReference>
<dbReference type="Proteomes" id="UP000002169">
    <property type="component" value="Chromosome 1"/>
</dbReference>
<dbReference type="GO" id="GO:0004425">
    <property type="term" value="F:indole-3-glycerol-phosphate synthase activity"/>
    <property type="evidence" value="ECO:0007669"/>
    <property type="project" value="UniProtKB-UniRule"/>
</dbReference>
<dbReference type="GO" id="GO:0004640">
    <property type="term" value="F:phosphoribosylanthranilate isomerase activity"/>
    <property type="evidence" value="ECO:0007669"/>
    <property type="project" value="TreeGrafter"/>
</dbReference>
<dbReference type="GO" id="GO:0000162">
    <property type="term" value="P:L-tryptophan biosynthetic process"/>
    <property type="evidence" value="ECO:0007669"/>
    <property type="project" value="UniProtKB-UniRule"/>
</dbReference>
<dbReference type="CDD" id="cd00331">
    <property type="entry name" value="IGPS"/>
    <property type="match status" value="1"/>
</dbReference>
<dbReference type="FunFam" id="3.20.20.70:FF:000024">
    <property type="entry name" value="Indole-3-glycerol phosphate synthase"/>
    <property type="match status" value="1"/>
</dbReference>
<dbReference type="Gene3D" id="3.20.20.70">
    <property type="entry name" value="Aldolase class I"/>
    <property type="match status" value="1"/>
</dbReference>
<dbReference type="HAMAP" id="MF_00134_B">
    <property type="entry name" value="IGPS_B"/>
    <property type="match status" value="1"/>
</dbReference>
<dbReference type="InterPro" id="IPR013785">
    <property type="entry name" value="Aldolase_TIM"/>
</dbReference>
<dbReference type="InterPro" id="IPR045186">
    <property type="entry name" value="Indole-3-glycerol_P_synth"/>
</dbReference>
<dbReference type="InterPro" id="IPR013798">
    <property type="entry name" value="Indole-3-glycerol_P_synth_dom"/>
</dbReference>
<dbReference type="InterPro" id="IPR001468">
    <property type="entry name" value="Indole-3-GlycerolPSynthase_CS"/>
</dbReference>
<dbReference type="InterPro" id="IPR011060">
    <property type="entry name" value="RibuloseP-bd_barrel"/>
</dbReference>
<dbReference type="NCBIfam" id="NF001373">
    <property type="entry name" value="PRK00278.1-6"/>
    <property type="match status" value="1"/>
</dbReference>
<dbReference type="NCBIfam" id="NF001377">
    <property type="entry name" value="PRK00278.2-4"/>
    <property type="match status" value="1"/>
</dbReference>
<dbReference type="PANTHER" id="PTHR22854:SF2">
    <property type="entry name" value="INDOLE-3-GLYCEROL-PHOSPHATE SYNTHASE"/>
    <property type="match status" value="1"/>
</dbReference>
<dbReference type="PANTHER" id="PTHR22854">
    <property type="entry name" value="TRYPTOPHAN BIOSYNTHESIS PROTEIN"/>
    <property type="match status" value="1"/>
</dbReference>
<dbReference type="Pfam" id="PF00218">
    <property type="entry name" value="IGPS"/>
    <property type="match status" value="1"/>
</dbReference>
<dbReference type="SUPFAM" id="SSF51366">
    <property type="entry name" value="Ribulose-phoshate binding barrel"/>
    <property type="match status" value="1"/>
</dbReference>
<dbReference type="PROSITE" id="PS00614">
    <property type="entry name" value="IGPS"/>
    <property type="match status" value="1"/>
</dbReference>
<sequence>MSDILDRIIAVKREEIAAALRSTPLEALKLEASARDLRDFVGALRAKHAAGNAAVIAEIKKASPSKGVLREHFVPADIARSYAAHGAACLSVLTDEQFFQGGVRYLEEARAACTLPVLRKDFIVDAYQIVEARAMGADAILLIAAALDTPLMQDLEAYAHSLGLAVLVEVHDRHEMEQALTLKTPLLGINNRNLRTFETSIQTTLDMLDMIPADRIVVTESGILSRTDVDTMRAANVNTFLVGEAFMRAEQPGEELARMFF</sequence>
<organism>
    <name type="scientific">Burkholderia orbicola (strain MC0-3)</name>
    <dbReference type="NCBI Taxonomy" id="406425"/>
    <lineage>
        <taxon>Bacteria</taxon>
        <taxon>Pseudomonadati</taxon>
        <taxon>Pseudomonadota</taxon>
        <taxon>Betaproteobacteria</taxon>
        <taxon>Burkholderiales</taxon>
        <taxon>Burkholderiaceae</taxon>
        <taxon>Burkholderia</taxon>
        <taxon>Burkholderia cepacia complex</taxon>
        <taxon>Burkholderia orbicola</taxon>
    </lineage>
</organism>
<accession>B1JUU5</accession>
<keyword id="KW-0028">Amino-acid biosynthesis</keyword>
<keyword id="KW-0057">Aromatic amino acid biosynthesis</keyword>
<keyword id="KW-0210">Decarboxylase</keyword>
<keyword id="KW-0456">Lyase</keyword>
<keyword id="KW-0822">Tryptophan biosynthesis</keyword>
<feature type="chain" id="PRO_1000095854" description="Indole-3-glycerol phosphate synthase">
    <location>
        <begin position="1"/>
        <end position="261"/>
    </location>
</feature>
<name>TRPC_BURO0</name>
<reference key="1">
    <citation type="submission" date="2008-02" db="EMBL/GenBank/DDBJ databases">
        <title>Complete sequence of chromosome 1 of Burkholderia cenocepacia MC0-3.</title>
        <authorList>
            <person name="Copeland A."/>
            <person name="Lucas S."/>
            <person name="Lapidus A."/>
            <person name="Barry K."/>
            <person name="Bruce D."/>
            <person name="Goodwin L."/>
            <person name="Glavina del Rio T."/>
            <person name="Dalin E."/>
            <person name="Tice H."/>
            <person name="Pitluck S."/>
            <person name="Chain P."/>
            <person name="Malfatti S."/>
            <person name="Shin M."/>
            <person name="Vergez L."/>
            <person name="Schmutz J."/>
            <person name="Larimer F."/>
            <person name="Land M."/>
            <person name="Hauser L."/>
            <person name="Kyrpides N."/>
            <person name="Mikhailova N."/>
            <person name="Tiedje J."/>
            <person name="Richardson P."/>
        </authorList>
    </citation>
    <scope>NUCLEOTIDE SEQUENCE [LARGE SCALE GENOMIC DNA]</scope>
    <source>
        <strain>MC0-3</strain>
    </source>
</reference>
<protein>
    <recommendedName>
        <fullName evidence="1">Indole-3-glycerol phosphate synthase</fullName>
        <shortName evidence="1">IGPS</shortName>
        <ecNumber evidence="1">4.1.1.48</ecNumber>
    </recommendedName>
</protein>
<comment type="catalytic activity">
    <reaction evidence="1">
        <text>1-(2-carboxyphenylamino)-1-deoxy-D-ribulose 5-phosphate + H(+) = (1S,2R)-1-C-(indol-3-yl)glycerol 3-phosphate + CO2 + H2O</text>
        <dbReference type="Rhea" id="RHEA:23476"/>
        <dbReference type="ChEBI" id="CHEBI:15377"/>
        <dbReference type="ChEBI" id="CHEBI:15378"/>
        <dbReference type="ChEBI" id="CHEBI:16526"/>
        <dbReference type="ChEBI" id="CHEBI:58613"/>
        <dbReference type="ChEBI" id="CHEBI:58866"/>
        <dbReference type="EC" id="4.1.1.48"/>
    </reaction>
</comment>
<comment type="pathway">
    <text evidence="1">Amino-acid biosynthesis; L-tryptophan biosynthesis; L-tryptophan from chorismate: step 4/5.</text>
</comment>
<comment type="similarity">
    <text evidence="1">Belongs to the TrpC family.</text>
</comment>
<evidence type="ECO:0000255" key="1">
    <source>
        <dbReference type="HAMAP-Rule" id="MF_00134"/>
    </source>
</evidence>
<gene>
    <name evidence="1" type="primary">trpC</name>
    <name type="ordered locus">Bcenmc03_0503</name>
</gene>